<proteinExistence type="evidence at protein level"/>
<protein>
    <recommendedName>
        <fullName>Transmembrane protein 154</fullName>
    </recommendedName>
</protein>
<keyword id="KW-0025">Alternative splicing</keyword>
<keyword id="KW-0472">Membrane</keyword>
<keyword id="KW-0597">Phosphoprotein</keyword>
<keyword id="KW-1185">Reference proteome</keyword>
<keyword id="KW-0732">Signal</keyword>
<keyword id="KW-0812">Transmembrane</keyword>
<keyword id="KW-1133">Transmembrane helix</keyword>
<feature type="signal peptide" evidence="1">
    <location>
        <begin position="1"/>
        <end position="22"/>
    </location>
</feature>
<feature type="chain" id="PRO_0000284504" description="Transmembrane protein 154">
    <location>
        <begin position="23"/>
        <end position="181"/>
    </location>
</feature>
<feature type="topological domain" description="Extracellular" evidence="1">
    <location>
        <begin position="23"/>
        <end position="74"/>
    </location>
</feature>
<feature type="transmembrane region" description="Helical" evidence="1">
    <location>
        <begin position="75"/>
        <end position="95"/>
    </location>
</feature>
<feature type="topological domain" description="Cytoplasmic" evidence="1">
    <location>
        <begin position="96"/>
        <end position="181"/>
    </location>
</feature>
<feature type="region of interest" description="Disordered" evidence="2">
    <location>
        <begin position="19"/>
        <end position="47"/>
    </location>
</feature>
<feature type="region of interest" description="Disordered" evidence="2">
    <location>
        <begin position="103"/>
        <end position="122"/>
    </location>
</feature>
<feature type="region of interest" description="Disordered" evidence="2">
    <location>
        <begin position="161"/>
        <end position="181"/>
    </location>
</feature>
<feature type="compositionally biased region" description="Polar residues" evidence="2">
    <location>
        <begin position="107"/>
        <end position="118"/>
    </location>
</feature>
<feature type="modified residue" description="Phosphotyrosine" evidence="5">
    <location>
        <position position="160"/>
    </location>
</feature>
<feature type="modified residue" description="Phosphoserine" evidence="5">
    <location>
        <position position="177"/>
    </location>
</feature>
<feature type="splice variant" id="VSP_024546" description="In isoform 2." evidence="3">
    <original>HE</original>
    <variation>RE</variation>
    <location>
        <begin position="120"/>
        <end position="121"/>
    </location>
</feature>
<feature type="splice variant" id="VSP_024547" description="In isoform 2." evidence="3">
    <location>
        <begin position="122"/>
        <end position="181"/>
    </location>
</feature>
<feature type="sequence conflict" description="In Ref. 1; BAC29708." evidence="4" ref="1">
    <original>K</original>
    <variation>E</variation>
    <location>
        <position position="105"/>
    </location>
</feature>
<feature type="sequence conflict" description="In Ref. 1; BAE41759." evidence="4" ref="1">
    <original>E</original>
    <variation>G</variation>
    <location>
        <position position="121"/>
    </location>
</feature>
<gene>
    <name type="primary">Tmem154</name>
</gene>
<accession>Q8C4Q9</accession>
<accession>Q3TB17</accession>
<accession>Q3TCN6</accession>
<accession>Q3TD45</accession>
<accession>Q8CB06</accession>
<evidence type="ECO:0000255" key="1"/>
<evidence type="ECO:0000256" key="2">
    <source>
        <dbReference type="SAM" id="MobiDB-lite"/>
    </source>
</evidence>
<evidence type="ECO:0000303" key="3">
    <source>
    </source>
</evidence>
<evidence type="ECO:0000305" key="4"/>
<evidence type="ECO:0007744" key="5">
    <source>
    </source>
</evidence>
<comment type="subcellular location">
    <subcellularLocation>
        <location evidence="4">Membrane</location>
        <topology evidence="4">Single-pass membrane protein</topology>
    </subcellularLocation>
</comment>
<comment type="alternative products">
    <event type="alternative splicing"/>
    <isoform>
        <id>Q8C4Q9-1</id>
        <name>1</name>
        <sequence type="displayed"/>
    </isoform>
    <isoform>
        <id>Q8C4Q9-2</id>
        <name>2</name>
        <sequence type="described" ref="VSP_024546 VSP_024547"/>
    </isoform>
</comment>
<name>TM154_MOUSE</name>
<reference key="1">
    <citation type="journal article" date="2005" name="Science">
        <title>The transcriptional landscape of the mammalian genome.</title>
        <authorList>
            <person name="Carninci P."/>
            <person name="Kasukawa T."/>
            <person name="Katayama S."/>
            <person name="Gough J."/>
            <person name="Frith M.C."/>
            <person name="Maeda N."/>
            <person name="Oyama R."/>
            <person name="Ravasi T."/>
            <person name="Lenhard B."/>
            <person name="Wells C."/>
            <person name="Kodzius R."/>
            <person name="Shimokawa K."/>
            <person name="Bajic V.B."/>
            <person name="Brenner S.E."/>
            <person name="Batalov S."/>
            <person name="Forrest A.R."/>
            <person name="Zavolan M."/>
            <person name="Davis M.J."/>
            <person name="Wilming L.G."/>
            <person name="Aidinis V."/>
            <person name="Allen J.E."/>
            <person name="Ambesi-Impiombato A."/>
            <person name="Apweiler R."/>
            <person name="Aturaliya R.N."/>
            <person name="Bailey T.L."/>
            <person name="Bansal M."/>
            <person name="Baxter L."/>
            <person name="Beisel K.W."/>
            <person name="Bersano T."/>
            <person name="Bono H."/>
            <person name="Chalk A.M."/>
            <person name="Chiu K.P."/>
            <person name="Choudhary V."/>
            <person name="Christoffels A."/>
            <person name="Clutterbuck D.R."/>
            <person name="Crowe M.L."/>
            <person name="Dalla E."/>
            <person name="Dalrymple B.P."/>
            <person name="de Bono B."/>
            <person name="Della Gatta G."/>
            <person name="di Bernardo D."/>
            <person name="Down T."/>
            <person name="Engstrom P."/>
            <person name="Fagiolini M."/>
            <person name="Faulkner G."/>
            <person name="Fletcher C.F."/>
            <person name="Fukushima T."/>
            <person name="Furuno M."/>
            <person name="Futaki S."/>
            <person name="Gariboldi M."/>
            <person name="Georgii-Hemming P."/>
            <person name="Gingeras T.R."/>
            <person name="Gojobori T."/>
            <person name="Green R.E."/>
            <person name="Gustincich S."/>
            <person name="Harbers M."/>
            <person name="Hayashi Y."/>
            <person name="Hensch T.K."/>
            <person name="Hirokawa N."/>
            <person name="Hill D."/>
            <person name="Huminiecki L."/>
            <person name="Iacono M."/>
            <person name="Ikeo K."/>
            <person name="Iwama A."/>
            <person name="Ishikawa T."/>
            <person name="Jakt M."/>
            <person name="Kanapin A."/>
            <person name="Katoh M."/>
            <person name="Kawasawa Y."/>
            <person name="Kelso J."/>
            <person name="Kitamura H."/>
            <person name="Kitano H."/>
            <person name="Kollias G."/>
            <person name="Krishnan S.P."/>
            <person name="Kruger A."/>
            <person name="Kummerfeld S.K."/>
            <person name="Kurochkin I.V."/>
            <person name="Lareau L.F."/>
            <person name="Lazarevic D."/>
            <person name="Lipovich L."/>
            <person name="Liu J."/>
            <person name="Liuni S."/>
            <person name="McWilliam S."/>
            <person name="Madan Babu M."/>
            <person name="Madera M."/>
            <person name="Marchionni L."/>
            <person name="Matsuda H."/>
            <person name="Matsuzawa S."/>
            <person name="Miki H."/>
            <person name="Mignone F."/>
            <person name="Miyake S."/>
            <person name="Morris K."/>
            <person name="Mottagui-Tabar S."/>
            <person name="Mulder N."/>
            <person name="Nakano N."/>
            <person name="Nakauchi H."/>
            <person name="Ng P."/>
            <person name="Nilsson R."/>
            <person name="Nishiguchi S."/>
            <person name="Nishikawa S."/>
            <person name="Nori F."/>
            <person name="Ohara O."/>
            <person name="Okazaki Y."/>
            <person name="Orlando V."/>
            <person name="Pang K.C."/>
            <person name="Pavan W.J."/>
            <person name="Pavesi G."/>
            <person name="Pesole G."/>
            <person name="Petrovsky N."/>
            <person name="Piazza S."/>
            <person name="Reed J."/>
            <person name="Reid J.F."/>
            <person name="Ring B.Z."/>
            <person name="Ringwald M."/>
            <person name="Rost B."/>
            <person name="Ruan Y."/>
            <person name="Salzberg S.L."/>
            <person name="Sandelin A."/>
            <person name="Schneider C."/>
            <person name="Schoenbach C."/>
            <person name="Sekiguchi K."/>
            <person name="Semple C.A."/>
            <person name="Seno S."/>
            <person name="Sessa L."/>
            <person name="Sheng Y."/>
            <person name="Shibata Y."/>
            <person name="Shimada H."/>
            <person name="Shimada K."/>
            <person name="Silva D."/>
            <person name="Sinclair B."/>
            <person name="Sperling S."/>
            <person name="Stupka E."/>
            <person name="Sugiura K."/>
            <person name="Sultana R."/>
            <person name="Takenaka Y."/>
            <person name="Taki K."/>
            <person name="Tammoja K."/>
            <person name="Tan S.L."/>
            <person name="Tang S."/>
            <person name="Taylor M.S."/>
            <person name="Tegner J."/>
            <person name="Teichmann S.A."/>
            <person name="Ueda H.R."/>
            <person name="van Nimwegen E."/>
            <person name="Verardo R."/>
            <person name="Wei C.L."/>
            <person name="Yagi K."/>
            <person name="Yamanishi H."/>
            <person name="Zabarovsky E."/>
            <person name="Zhu S."/>
            <person name="Zimmer A."/>
            <person name="Hide W."/>
            <person name="Bult C."/>
            <person name="Grimmond S.M."/>
            <person name="Teasdale R.D."/>
            <person name="Liu E.T."/>
            <person name="Brusic V."/>
            <person name="Quackenbush J."/>
            <person name="Wahlestedt C."/>
            <person name="Mattick J.S."/>
            <person name="Hume D.A."/>
            <person name="Kai C."/>
            <person name="Sasaki D."/>
            <person name="Tomaru Y."/>
            <person name="Fukuda S."/>
            <person name="Kanamori-Katayama M."/>
            <person name="Suzuki M."/>
            <person name="Aoki J."/>
            <person name="Arakawa T."/>
            <person name="Iida J."/>
            <person name="Imamura K."/>
            <person name="Itoh M."/>
            <person name="Kato T."/>
            <person name="Kawaji H."/>
            <person name="Kawagashira N."/>
            <person name="Kawashima T."/>
            <person name="Kojima M."/>
            <person name="Kondo S."/>
            <person name="Konno H."/>
            <person name="Nakano K."/>
            <person name="Ninomiya N."/>
            <person name="Nishio T."/>
            <person name="Okada M."/>
            <person name="Plessy C."/>
            <person name="Shibata K."/>
            <person name="Shiraki T."/>
            <person name="Suzuki S."/>
            <person name="Tagami M."/>
            <person name="Waki K."/>
            <person name="Watahiki A."/>
            <person name="Okamura-Oho Y."/>
            <person name="Suzuki H."/>
            <person name="Kawai J."/>
            <person name="Hayashizaki Y."/>
        </authorList>
    </citation>
    <scope>NUCLEOTIDE SEQUENCE [LARGE SCALE MRNA] (ISOFORMS 1 AND 2)</scope>
    <source>
        <strain>C57BL/6J</strain>
        <strain>NOD</strain>
        <tissue>Head</tissue>
        <tissue>Vagina</tissue>
    </source>
</reference>
<reference key="2">
    <citation type="journal article" date="2004" name="Genome Res.">
        <title>The status, quality, and expansion of the NIH full-length cDNA project: the Mammalian Gene Collection (MGC).</title>
        <authorList>
            <consortium name="The MGC Project Team"/>
        </authorList>
    </citation>
    <scope>NUCLEOTIDE SEQUENCE [LARGE SCALE MRNA] (ISOFORM 1)</scope>
    <source>
        <strain>FVB/N-3</strain>
        <tissue>Mammary tumor</tissue>
    </source>
</reference>
<reference key="3">
    <citation type="journal article" date="2007" name="J. Immunol.">
        <title>Quantitative time-resolved phosphoproteomic analysis of mast cell signaling.</title>
        <authorList>
            <person name="Cao L."/>
            <person name="Yu K."/>
            <person name="Banh C."/>
            <person name="Nguyen V."/>
            <person name="Ritz A."/>
            <person name="Raphael B.J."/>
            <person name="Kawakami Y."/>
            <person name="Kawakami T."/>
            <person name="Salomon A.R."/>
        </authorList>
    </citation>
    <scope>PHOSPHORYLATION [LARGE SCALE ANALYSIS] AT TYR-160 AND SER-177</scope>
    <scope>IDENTIFICATION BY MASS SPECTROMETRY [LARGE SCALE ANALYSIS]</scope>
    <source>
        <tissue>Mast cell</tissue>
    </source>
</reference>
<organism>
    <name type="scientific">Mus musculus</name>
    <name type="common">Mouse</name>
    <dbReference type="NCBI Taxonomy" id="10090"/>
    <lineage>
        <taxon>Eukaryota</taxon>
        <taxon>Metazoa</taxon>
        <taxon>Chordata</taxon>
        <taxon>Craniata</taxon>
        <taxon>Vertebrata</taxon>
        <taxon>Euteleostomi</taxon>
        <taxon>Mammalia</taxon>
        <taxon>Eutheria</taxon>
        <taxon>Euarchontoglires</taxon>
        <taxon>Glires</taxon>
        <taxon>Rodentia</taxon>
        <taxon>Myomorpha</taxon>
        <taxon>Muroidea</taxon>
        <taxon>Muridae</taxon>
        <taxon>Murinae</taxon>
        <taxon>Mus</taxon>
        <taxon>Mus</taxon>
    </lineage>
</organism>
<dbReference type="EMBL" id="AK037111">
    <property type="protein sequence ID" value="BAC29708.1"/>
    <property type="molecule type" value="mRNA"/>
</dbReference>
<dbReference type="EMBL" id="AK081441">
    <property type="protein sequence ID" value="BAC38221.1"/>
    <property type="molecule type" value="mRNA"/>
</dbReference>
<dbReference type="EMBL" id="AK154236">
    <property type="protein sequence ID" value="BAE32454.1"/>
    <property type="molecule type" value="mRNA"/>
</dbReference>
<dbReference type="EMBL" id="AK170385">
    <property type="protein sequence ID" value="BAE41759.1"/>
    <property type="molecule type" value="mRNA"/>
</dbReference>
<dbReference type="EMBL" id="AK170626">
    <property type="protein sequence ID" value="BAE41920.1"/>
    <property type="molecule type" value="mRNA"/>
</dbReference>
<dbReference type="EMBL" id="AK170665">
    <property type="protein sequence ID" value="BAE41946.1"/>
    <property type="molecule type" value="mRNA"/>
</dbReference>
<dbReference type="EMBL" id="AK171510">
    <property type="protein sequence ID" value="BAE42497.1"/>
    <property type="molecule type" value="mRNA"/>
</dbReference>
<dbReference type="EMBL" id="BC096432">
    <property type="protein sequence ID" value="AAH96432.1"/>
    <property type="molecule type" value="mRNA"/>
</dbReference>
<dbReference type="EMBL" id="BC113174">
    <property type="protein sequence ID" value="AAI13175.1"/>
    <property type="molecule type" value="mRNA"/>
</dbReference>
<dbReference type="EMBL" id="BC113175">
    <property type="protein sequence ID" value="AAI13176.1"/>
    <property type="molecule type" value="mRNA"/>
</dbReference>
<dbReference type="CCDS" id="CCDS38467.1">
    <molecule id="Q8C4Q9-1"/>
</dbReference>
<dbReference type="RefSeq" id="NP_796234.1">
    <molecule id="Q8C4Q9-1"/>
    <property type="nucleotide sequence ID" value="NM_177260.2"/>
</dbReference>
<dbReference type="FunCoup" id="Q8C4Q9">
    <property type="interactions" value="15"/>
</dbReference>
<dbReference type="STRING" id="10090.ENSMUSP00000103310"/>
<dbReference type="iPTMnet" id="Q8C4Q9"/>
<dbReference type="PhosphoSitePlus" id="Q8C4Q9"/>
<dbReference type="PaxDb" id="10090-ENSMUSP00000103310"/>
<dbReference type="PeptideAtlas" id="Q8C4Q9"/>
<dbReference type="ProteomicsDB" id="259536">
    <molecule id="Q8C4Q9-1"/>
</dbReference>
<dbReference type="Antibodypedia" id="67855">
    <property type="antibodies" value="40 antibodies from 13 providers"/>
</dbReference>
<dbReference type="DNASU" id="320782"/>
<dbReference type="Ensembl" id="ENSMUST00000107682.2">
    <molecule id="Q8C4Q9-1"/>
    <property type="protein sequence ID" value="ENSMUSP00000103310.2"/>
    <property type="gene ID" value="ENSMUSG00000056498.14"/>
</dbReference>
<dbReference type="GeneID" id="320782"/>
<dbReference type="KEGG" id="mmu:320782"/>
<dbReference type="UCSC" id="uc008pqi.1">
    <molecule id="Q8C4Q9-2"/>
    <property type="organism name" value="mouse"/>
</dbReference>
<dbReference type="UCSC" id="uc008pqj.1">
    <molecule id="Q8C4Q9-1"/>
    <property type="organism name" value="mouse"/>
</dbReference>
<dbReference type="AGR" id="MGI:2444725"/>
<dbReference type="CTD" id="201799"/>
<dbReference type="MGI" id="MGI:2444725">
    <property type="gene designation" value="Tmem154"/>
</dbReference>
<dbReference type="VEuPathDB" id="HostDB:ENSMUSG00000056498"/>
<dbReference type="eggNOG" id="ENOG502SASK">
    <property type="taxonomic scope" value="Eukaryota"/>
</dbReference>
<dbReference type="GeneTree" id="ENSGT00390000016183"/>
<dbReference type="HOGENOM" id="CLU_126881_0_0_1"/>
<dbReference type="InParanoid" id="Q8C4Q9"/>
<dbReference type="OMA" id="MNRSADC"/>
<dbReference type="OrthoDB" id="9451445at2759"/>
<dbReference type="PhylomeDB" id="Q8C4Q9"/>
<dbReference type="TreeFam" id="TF336891"/>
<dbReference type="BioGRID-ORCS" id="320782">
    <property type="hits" value="3 hits in 77 CRISPR screens"/>
</dbReference>
<dbReference type="ChiTaRS" id="Tmem154">
    <property type="organism name" value="mouse"/>
</dbReference>
<dbReference type="PRO" id="PR:Q8C4Q9"/>
<dbReference type="Proteomes" id="UP000000589">
    <property type="component" value="Chromosome 3"/>
</dbReference>
<dbReference type="RNAct" id="Q8C4Q9">
    <property type="molecule type" value="protein"/>
</dbReference>
<dbReference type="Bgee" id="ENSMUSG00000056498">
    <property type="expression patterns" value="Expressed in granulocyte and 80 other cell types or tissues"/>
</dbReference>
<dbReference type="GO" id="GO:0016020">
    <property type="term" value="C:membrane"/>
    <property type="evidence" value="ECO:0007669"/>
    <property type="project" value="UniProtKB-SubCell"/>
</dbReference>
<dbReference type="InterPro" id="IPR028064">
    <property type="entry name" value="TMEM154"/>
</dbReference>
<dbReference type="InterPro" id="IPR053087">
    <property type="entry name" value="TMEM154-like"/>
</dbReference>
<dbReference type="PANTHER" id="PTHR36526">
    <property type="entry name" value="TRANSMEMBRANE PROTEIN 154"/>
    <property type="match status" value="1"/>
</dbReference>
<dbReference type="PANTHER" id="PTHR36526:SF1">
    <property type="entry name" value="TRANSMEMBRANE PROTEIN 154"/>
    <property type="match status" value="1"/>
</dbReference>
<dbReference type="Pfam" id="PF15102">
    <property type="entry name" value="TMEM154"/>
    <property type="match status" value="1"/>
</dbReference>
<sequence length="181" mass="19879">MTVPCAALVLALGLAFGQSSQGNDEESEYSGQSITEEENSEDETTRSALATVTTEALAENVNSTHTNDTSNQVEFILMVAIPLAALLILLFMVLIATYFKSKRPKQEPSSQGSQSALQTHELGGETLKVPIFEEDTPSVMEIEMEELDKWMNSMNRNADYECLPTLKEEKEPNPSPSDNES</sequence>